<sequence length="217" mass="23516">MITWYGHACFKVDNVLIDPFVPNPLCDLPYDEIMEGVEVIAVTHGHADHLGNAEELAKTYNVPVVTNHEISVYLSERGVCAEGMNIGGTIEINGAKLTMVKAEHSSDISPTISGGVAAGFIINDRVYHAGDTGLFGDMELIGEIYAPQIALLPIGGRYTMGIDEALVAIELIYPEIVIPMHYNTFPLIEVDVNEFVKKAEALGVEVIVPKIGEPLEL</sequence>
<feature type="chain" id="PRO_0000156393" description="UPF0173 metal-dependent hydrolase MJ1163">
    <location>
        <begin position="1"/>
        <end position="217"/>
    </location>
</feature>
<comment type="similarity">
    <text evidence="1">Belongs to the UPF0173 family.</text>
</comment>
<protein>
    <recommendedName>
        <fullName evidence="1">UPF0173 metal-dependent hydrolase MJ1163</fullName>
    </recommendedName>
</protein>
<keyword id="KW-0378">Hydrolase</keyword>
<keyword id="KW-1185">Reference proteome</keyword>
<gene>
    <name type="ordered locus">MJ1163</name>
</gene>
<evidence type="ECO:0000255" key="1">
    <source>
        <dbReference type="HAMAP-Rule" id="MF_00457"/>
    </source>
</evidence>
<accession>Q58563</accession>
<proteinExistence type="inferred from homology"/>
<organism>
    <name type="scientific">Methanocaldococcus jannaschii (strain ATCC 43067 / DSM 2661 / JAL-1 / JCM 10045 / NBRC 100440)</name>
    <name type="common">Methanococcus jannaschii</name>
    <dbReference type="NCBI Taxonomy" id="243232"/>
    <lineage>
        <taxon>Archaea</taxon>
        <taxon>Methanobacteriati</taxon>
        <taxon>Methanobacteriota</taxon>
        <taxon>Methanomada group</taxon>
        <taxon>Methanococci</taxon>
        <taxon>Methanococcales</taxon>
        <taxon>Methanocaldococcaceae</taxon>
        <taxon>Methanocaldococcus</taxon>
    </lineage>
</organism>
<name>Y1163_METJA</name>
<dbReference type="EMBL" id="L77117">
    <property type="protein sequence ID" value="AAB99165.1"/>
    <property type="molecule type" value="Genomic_DNA"/>
</dbReference>
<dbReference type="PIR" id="B64445">
    <property type="entry name" value="B64445"/>
</dbReference>
<dbReference type="RefSeq" id="WP_010870676.1">
    <property type="nucleotide sequence ID" value="NC_000909.1"/>
</dbReference>
<dbReference type="SMR" id="Q58563"/>
<dbReference type="STRING" id="243232.MJ_1163"/>
<dbReference type="PaxDb" id="243232-MJ_1163"/>
<dbReference type="EnsemblBacteria" id="AAB99165">
    <property type="protein sequence ID" value="AAB99165"/>
    <property type="gene ID" value="MJ_1163"/>
</dbReference>
<dbReference type="GeneID" id="1452061"/>
<dbReference type="KEGG" id="mja:MJ_1163"/>
<dbReference type="eggNOG" id="arCOG00497">
    <property type="taxonomic scope" value="Archaea"/>
</dbReference>
<dbReference type="HOGENOM" id="CLU_070010_4_0_2"/>
<dbReference type="InParanoid" id="Q58563"/>
<dbReference type="OrthoDB" id="28313at2157"/>
<dbReference type="PhylomeDB" id="Q58563"/>
<dbReference type="Proteomes" id="UP000000805">
    <property type="component" value="Chromosome"/>
</dbReference>
<dbReference type="GO" id="GO:0016787">
    <property type="term" value="F:hydrolase activity"/>
    <property type="evidence" value="ECO:0000318"/>
    <property type="project" value="GO_Central"/>
</dbReference>
<dbReference type="Gene3D" id="3.60.15.10">
    <property type="entry name" value="Ribonuclease Z/Hydroxyacylglutathione hydrolase-like"/>
    <property type="match status" value="1"/>
</dbReference>
<dbReference type="HAMAP" id="MF_00457">
    <property type="entry name" value="UPF0173"/>
    <property type="match status" value="1"/>
</dbReference>
<dbReference type="InterPro" id="IPR001279">
    <property type="entry name" value="Metallo-B-lactamas"/>
</dbReference>
<dbReference type="InterPro" id="IPR036866">
    <property type="entry name" value="RibonucZ/Hydroxyglut_hydro"/>
</dbReference>
<dbReference type="InterPro" id="IPR022877">
    <property type="entry name" value="UPF0173"/>
</dbReference>
<dbReference type="InterPro" id="IPR050114">
    <property type="entry name" value="UPF0173_UPF0282_UlaG_hydrolase"/>
</dbReference>
<dbReference type="NCBIfam" id="NF001911">
    <property type="entry name" value="PRK00685.1"/>
    <property type="match status" value="1"/>
</dbReference>
<dbReference type="PANTHER" id="PTHR43546:SF3">
    <property type="entry name" value="UPF0173 METAL-DEPENDENT HYDROLASE MJ1163"/>
    <property type="match status" value="1"/>
</dbReference>
<dbReference type="PANTHER" id="PTHR43546">
    <property type="entry name" value="UPF0173 METAL-DEPENDENT HYDROLASE MJ1163-RELATED"/>
    <property type="match status" value="1"/>
</dbReference>
<dbReference type="Pfam" id="PF12706">
    <property type="entry name" value="Lactamase_B_2"/>
    <property type="match status" value="1"/>
</dbReference>
<dbReference type="SMART" id="SM00849">
    <property type="entry name" value="Lactamase_B"/>
    <property type="match status" value="1"/>
</dbReference>
<dbReference type="SUPFAM" id="SSF56281">
    <property type="entry name" value="Metallo-hydrolase/oxidoreductase"/>
    <property type="match status" value="1"/>
</dbReference>
<reference key="1">
    <citation type="journal article" date="1996" name="Science">
        <title>Complete genome sequence of the methanogenic archaeon, Methanococcus jannaschii.</title>
        <authorList>
            <person name="Bult C.J."/>
            <person name="White O."/>
            <person name="Olsen G.J."/>
            <person name="Zhou L."/>
            <person name="Fleischmann R.D."/>
            <person name="Sutton G.G."/>
            <person name="Blake J.A."/>
            <person name="FitzGerald L.M."/>
            <person name="Clayton R.A."/>
            <person name="Gocayne J.D."/>
            <person name="Kerlavage A.R."/>
            <person name="Dougherty B.A."/>
            <person name="Tomb J.-F."/>
            <person name="Adams M.D."/>
            <person name="Reich C.I."/>
            <person name="Overbeek R."/>
            <person name="Kirkness E.F."/>
            <person name="Weinstock K.G."/>
            <person name="Merrick J.M."/>
            <person name="Glodek A."/>
            <person name="Scott J.L."/>
            <person name="Geoghagen N.S.M."/>
            <person name="Weidman J.F."/>
            <person name="Fuhrmann J.L."/>
            <person name="Nguyen D."/>
            <person name="Utterback T.R."/>
            <person name="Kelley J.M."/>
            <person name="Peterson J.D."/>
            <person name="Sadow P.W."/>
            <person name="Hanna M.C."/>
            <person name="Cotton M.D."/>
            <person name="Roberts K.M."/>
            <person name="Hurst M.A."/>
            <person name="Kaine B.P."/>
            <person name="Borodovsky M."/>
            <person name="Klenk H.-P."/>
            <person name="Fraser C.M."/>
            <person name="Smith H.O."/>
            <person name="Woese C.R."/>
            <person name="Venter J.C."/>
        </authorList>
    </citation>
    <scope>NUCLEOTIDE SEQUENCE [LARGE SCALE GENOMIC DNA]</scope>
    <source>
        <strain>ATCC 43067 / DSM 2661 / JAL-1 / JCM 10045 / NBRC 100440</strain>
    </source>
</reference>